<dbReference type="EMBL" id="CP000053">
    <property type="protein sequence ID" value="AAY61099.1"/>
    <property type="molecule type" value="Genomic_DNA"/>
</dbReference>
<dbReference type="SMR" id="Q4UMV9"/>
<dbReference type="STRING" id="315456.RF_0248"/>
<dbReference type="KEGG" id="rfe:RF_0248"/>
<dbReference type="eggNOG" id="COG1160">
    <property type="taxonomic scope" value="Bacteria"/>
</dbReference>
<dbReference type="HOGENOM" id="CLU_016077_5_0_5"/>
<dbReference type="OrthoDB" id="9805918at2"/>
<dbReference type="Proteomes" id="UP000008548">
    <property type="component" value="Chromosome"/>
</dbReference>
<dbReference type="GO" id="GO:0005525">
    <property type="term" value="F:GTP binding"/>
    <property type="evidence" value="ECO:0007669"/>
    <property type="project" value="UniProtKB-UniRule"/>
</dbReference>
<dbReference type="GO" id="GO:0042254">
    <property type="term" value="P:ribosome biogenesis"/>
    <property type="evidence" value="ECO:0007669"/>
    <property type="project" value="UniProtKB-KW"/>
</dbReference>
<dbReference type="CDD" id="cd01894">
    <property type="entry name" value="EngA1"/>
    <property type="match status" value="1"/>
</dbReference>
<dbReference type="CDD" id="cd01895">
    <property type="entry name" value="EngA2"/>
    <property type="match status" value="1"/>
</dbReference>
<dbReference type="FunFam" id="3.30.300.20:FF:000004">
    <property type="entry name" value="GTPase Der"/>
    <property type="match status" value="1"/>
</dbReference>
<dbReference type="Gene3D" id="3.30.300.20">
    <property type="match status" value="1"/>
</dbReference>
<dbReference type="Gene3D" id="3.40.50.300">
    <property type="entry name" value="P-loop containing nucleotide triphosphate hydrolases"/>
    <property type="match status" value="2"/>
</dbReference>
<dbReference type="HAMAP" id="MF_00195">
    <property type="entry name" value="GTPase_Der"/>
    <property type="match status" value="1"/>
</dbReference>
<dbReference type="InterPro" id="IPR031166">
    <property type="entry name" value="G_ENGA"/>
</dbReference>
<dbReference type="InterPro" id="IPR006073">
    <property type="entry name" value="GTP-bd"/>
</dbReference>
<dbReference type="InterPro" id="IPR016484">
    <property type="entry name" value="GTPase_Der"/>
</dbReference>
<dbReference type="InterPro" id="IPR032859">
    <property type="entry name" value="KH_dom-like"/>
</dbReference>
<dbReference type="InterPro" id="IPR015946">
    <property type="entry name" value="KH_dom-like_a/b"/>
</dbReference>
<dbReference type="InterPro" id="IPR027417">
    <property type="entry name" value="P-loop_NTPase"/>
</dbReference>
<dbReference type="InterPro" id="IPR005225">
    <property type="entry name" value="Small_GTP-bd"/>
</dbReference>
<dbReference type="NCBIfam" id="TIGR03594">
    <property type="entry name" value="GTPase_EngA"/>
    <property type="match status" value="1"/>
</dbReference>
<dbReference type="NCBIfam" id="TIGR00231">
    <property type="entry name" value="small_GTP"/>
    <property type="match status" value="2"/>
</dbReference>
<dbReference type="PANTHER" id="PTHR43834">
    <property type="entry name" value="GTPASE DER"/>
    <property type="match status" value="1"/>
</dbReference>
<dbReference type="PANTHER" id="PTHR43834:SF6">
    <property type="entry name" value="GTPASE DER"/>
    <property type="match status" value="1"/>
</dbReference>
<dbReference type="Pfam" id="PF14714">
    <property type="entry name" value="KH_dom-like"/>
    <property type="match status" value="1"/>
</dbReference>
<dbReference type="Pfam" id="PF01926">
    <property type="entry name" value="MMR_HSR1"/>
    <property type="match status" value="2"/>
</dbReference>
<dbReference type="PIRSF" id="PIRSF006485">
    <property type="entry name" value="GTP-binding_EngA"/>
    <property type="match status" value="1"/>
</dbReference>
<dbReference type="PRINTS" id="PR00326">
    <property type="entry name" value="GTP1OBG"/>
</dbReference>
<dbReference type="SUPFAM" id="SSF52540">
    <property type="entry name" value="P-loop containing nucleoside triphosphate hydrolases"/>
    <property type="match status" value="2"/>
</dbReference>
<dbReference type="PROSITE" id="PS51712">
    <property type="entry name" value="G_ENGA"/>
    <property type="match status" value="2"/>
</dbReference>
<organism>
    <name type="scientific">Rickettsia felis (strain ATCC VR-1525 / URRWXCal2)</name>
    <name type="common">Rickettsia azadi</name>
    <dbReference type="NCBI Taxonomy" id="315456"/>
    <lineage>
        <taxon>Bacteria</taxon>
        <taxon>Pseudomonadati</taxon>
        <taxon>Pseudomonadota</taxon>
        <taxon>Alphaproteobacteria</taxon>
        <taxon>Rickettsiales</taxon>
        <taxon>Rickettsiaceae</taxon>
        <taxon>Rickettsieae</taxon>
        <taxon>Rickettsia</taxon>
        <taxon>spotted fever group</taxon>
    </lineage>
</organism>
<name>DER_RICFE</name>
<comment type="function">
    <text evidence="1">GTPase that plays an essential role in the late steps of ribosome biogenesis.</text>
</comment>
<comment type="subunit">
    <text evidence="1">Associates with the 50S ribosomal subunit.</text>
</comment>
<comment type="similarity">
    <text evidence="1">Belongs to the TRAFAC class TrmE-Era-EngA-EngB-Septin-like GTPase superfamily. EngA (Der) GTPase family.</text>
</comment>
<evidence type="ECO:0000255" key="1">
    <source>
        <dbReference type="HAMAP-Rule" id="MF_00195"/>
    </source>
</evidence>
<reference key="1">
    <citation type="journal article" date="2005" name="PLoS Biol.">
        <title>The genome sequence of Rickettsia felis identifies the first putative conjugative plasmid in an obligate intracellular parasite.</title>
        <authorList>
            <person name="Ogata H."/>
            <person name="Renesto P."/>
            <person name="Audic S."/>
            <person name="Robert C."/>
            <person name="Blanc G."/>
            <person name="Fournier P.-E."/>
            <person name="Parinello H."/>
            <person name="Claverie J.-M."/>
            <person name="Raoult D."/>
        </authorList>
    </citation>
    <scope>NUCLEOTIDE SEQUENCE [LARGE SCALE GENOMIC DNA]</scope>
    <source>
        <strain>ATCC VR-1525 / URRWXCal2</strain>
    </source>
</reference>
<keyword id="KW-0342">GTP-binding</keyword>
<keyword id="KW-0547">Nucleotide-binding</keyword>
<keyword id="KW-0677">Repeat</keyword>
<keyword id="KW-0690">Ribosome biogenesis</keyword>
<protein>
    <recommendedName>
        <fullName evidence="1">GTPase Der</fullName>
    </recommendedName>
    <alternativeName>
        <fullName evidence="1">GTP-binding protein EngA</fullName>
    </alternativeName>
</protein>
<proteinExistence type="inferred from homology"/>
<accession>Q4UMV9</accession>
<sequence length="447" mass="50734">MTKKIITLVGRPNVGKSTLFNRLSIRKKAIVHDLPGVTRDRKYTEGKIGSFEFLLIDTPGLEENPDSMGERLIEQTTKAILEADLICFMVDGRSGILPDDKLLGSFVRKYNKPAILIVNKCEKAFDFDKEYYKLGFDSMVAISAEHGTGLIDLYDEIIAKLPEEESIETNIADPIKRDCLQIVVSGRPNAGKSTFINALINDERLLTGPEAGITRESIEIDWQYKNNHIKLIDTAGLRKKSTITESLEKLSASDAINSIKFANTVILMIDALAPLKQQDLNIASHVVNEGRSIVIVVNKWDLVKESEKEAFQEEFYYQINTHLPQVKGVPVLFISAINKQNIEQVLDACLKIYKIWNKKITTSKLNEWLNFTTEAHPLPLQKGGKRVRVKYMTQTKTRPPTFKLFSNNPEKITDSYTRYLVNNMREAFDMPGIPIRFTYVKTKNPYV</sequence>
<gene>
    <name evidence="1" type="primary">der</name>
    <name type="synonym">engA</name>
    <name type="ordered locus">RF_0248</name>
</gene>
<feature type="chain" id="PRO_0000278048" description="GTPase Der">
    <location>
        <begin position="1"/>
        <end position="447"/>
    </location>
</feature>
<feature type="domain" description="EngA-type G 1">
    <location>
        <begin position="4"/>
        <end position="165"/>
    </location>
</feature>
<feature type="domain" description="EngA-type G 2">
    <location>
        <begin position="180"/>
        <end position="357"/>
    </location>
</feature>
<feature type="domain" description="KH-like" evidence="1">
    <location>
        <begin position="358"/>
        <end position="443"/>
    </location>
</feature>
<feature type="binding site" evidence="1">
    <location>
        <begin position="10"/>
        <end position="17"/>
    </location>
    <ligand>
        <name>GTP</name>
        <dbReference type="ChEBI" id="CHEBI:37565"/>
        <label>1</label>
    </ligand>
</feature>
<feature type="binding site" evidence="1">
    <location>
        <begin position="57"/>
        <end position="61"/>
    </location>
    <ligand>
        <name>GTP</name>
        <dbReference type="ChEBI" id="CHEBI:37565"/>
        <label>1</label>
    </ligand>
</feature>
<feature type="binding site" evidence="1">
    <location>
        <begin position="119"/>
        <end position="122"/>
    </location>
    <ligand>
        <name>GTP</name>
        <dbReference type="ChEBI" id="CHEBI:37565"/>
        <label>1</label>
    </ligand>
</feature>
<feature type="binding site" evidence="1">
    <location>
        <begin position="186"/>
        <end position="193"/>
    </location>
    <ligand>
        <name>GTP</name>
        <dbReference type="ChEBI" id="CHEBI:37565"/>
        <label>2</label>
    </ligand>
</feature>
<feature type="binding site" evidence="1">
    <location>
        <begin position="233"/>
        <end position="237"/>
    </location>
    <ligand>
        <name>GTP</name>
        <dbReference type="ChEBI" id="CHEBI:37565"/>
        <label>2</label>
    </ligand>
</feature>
<feature type="binding site" evidence="1">
    <location>
        <begin position="298"/>
        <end position="301"/>
    </location>
    <ligand>
        <name>GTP</name>
        <dbReference type="ChEBI" id="CHEBI:37565"/>
        <label>2</label>
    </ligand>
</feature>